<accession>Q66H69</accession>
<sequence>MSLWKKTLYKSVCLALALLVAVTVFQRSVTPGQFLQDPLPPTLGPPKTGSLVNPNSFWKSSKDVVAPTPTVPRGPQVWDVVTTNCSINVNLTHQPWFQNLEPHFRQFLAYQHCRYFPMLLNHPEKCAGDVYLLVVVKSVITQHDRREVIRQTWGHEWESAGPDRGAVRTLFLLGTASKQEERTHYQQLLAYEDRLYGDILQWDFLDSFFNLTLKEIHFLKWLDIYCPNVPFIFKGDDDVFVNPTNLLEFLSDRQPQENLFVGDVLKHARPIRKKDNKYYIPAVMYSKATYPPYAGGGGFLMSGSLARQLHHACDTLELFPIDDVFLGMCLEVLGVKPTGHEGFKTFGISRVRGSRMNKEPCFYRSMLVVHKLLPAELLAMWDLVHSNLTCSLKFQVL</sequence>
<name>B3GN7_RAT</name>
<organism>
    <name type="scientific">Rattus norvegicus</name>
    <name type="common">Rat</name>
    <dbReference type="NCBI Taxonomy" id="10116"/>
    <lineage>
        <taxon>Eukaryota</taxon>
        <taxon>Metazoa</taxon>
        <taxon>Chordata</taxon>
        <taxon>Craniata</taxon>
        <taxon>Vertebrata</taxon>
        <taxon>Euteleostomi</taxon>
        <taxon>Mammalia</taxon>
        <taxon>Eutheria</taxon>
        <taxon>Euarchontoglires</taxon>
        <taxon>Glires</taxon>
        <taxon>Rodentia</taxon>
        <taxon>Myomorpha</taxon>
        <taxon>Muroidea</taxon>
        <taxon>Muridae</taxon>
        <taxon>Murinae</taxon>
        <taxon>Rattus</taxon>
    </lineage>
</organism>
<keyword id="KW-0325">Glycoprotein</keyword>
<keyword id="KW-0328">Glycosyltransferase</keyword>
<keyword id="KW-0333">Golgi apparatus</keyword>
<keyword id="KW-0472">Membrane</keyword>
<keyword id="KW-1185">Reference proteome</keyword>
<keyword id="KW-0735">Signal-anchor</keyword>
<keyword id="KW-0808">Transferase</keyword>
<keyword id="KW-0812">Transmembrane</keyword>
<keyword id="KW-1133">Transmembrane helix</keyword>
<comment type="function">
    <text evidence="1 2">N-acetyl glucosamine (GlcNAc) transferase that catalyzes the transfer of GlcNAc via a beta1-&gt;3 linkage from UDP-GlcNAc to the non-reducing terminal galactose (Gal) in the linearly growing chain of N- and O-linked keratan sulfate proteoglycans. Cooperates with B4GALT4 galactosyltransferase and CHST6 and CHST1 sulfotransferases to construct and elongate mono- and disulfated disaccharide units [-&gt;3Galbeta1-&gt;4(6-sulfoGlcNAcbeta)1-&gt;] and [-&gt;3(6-sulfoGalbeta)1-&gt;4(6-sulfoGlcNAcbeta)1-&gt;] within keratan sulfate polymer (By similarity). Involved in biosynthesis of N-linked keratan sulfate proteoglycans in cornea, with an impact on proteoglycan fibril organization and corneal transparency (By similarity). May play a role in the maintenance of tissue architecture by suppressing cellular motility and invasion (By similarity).</text>
</comment>
<comment type="pathway">
    <text evidence="2">Protein modification; protein glycosylation.</text>
</comment>
<comment type="subcellular location">
    <subcellularLocation>
        <location evidence="4">Golgi apparatus membrane</location>
        <topology evidence="4">Single-pass type II membrane protein</topology>
    </subcellularLocation>
</comment>
<comment type="similarity">
    <text evidence="4">Belongs to the glycosyltransferase 31 family.</text>
</comment>
<gene>
    <name type="primary">B3gnt7</name>
</gene>
<reference key="1">
    <citation type="journal article" date="2004" name="Genome Res.">
        <title>The status, quality, and expansion of the NIH full-length cDNA project: the Mammalian Gene Collection (MGC).</title>
        <authorList>
            <consortium name="The MGC Project Team"/>
        </authorList>
    </citation>
    <scope>NUCLEOTIDE SEQUENCE [LARGE SCALE MRNA]</scope>
    <source>
        <tissue>Kidney</tissue>
    </source>
</reference>
<feature type="chain" id="PRO_0000264620" description="UDP-GlcNAc:betaGal beta-1,3-N-acetylglucosaminyltransferase 7">
    <location>
        <begin position="1"/>
        <end position="397"/>
    </location>
</feature>
<feature type="topological domain" description="Cytoplasmic" evidence="3">
    <location>
        <begin position="1"/>
        <end position="6"/>
    </location>
</feature>
<feature type="transmembrane region" description="Helical; Signal-anchor for type II membrane protein" evidence="3">
    <location>
        <begin position="7"/>
        <end position="26"/>
    </location>
</feature>
<feature type="topological domain" description="Lumenal" evidence="3">
    <location>
        <begin position="27"/>
        <end position="397"/>
    </location>
</feature>
<feature type="glycosylation site" description="N-linked (GlcNAc...) asparagine" evidence="3">
    <location>
        <position position="84"/>
    </location>
</feature>
<feature type="glycosylation site" description="N-linked (GlcNAc...) asparagine" evidence="3">
    <location>
        <position position="90"/>
    </location>
</feature>
<feature type="glycosylation site" description="N-linked (GlcNAc...) asparagine" evidence="3">
    <location>
        <position position="210"/>
    </location>
</feature>
<feature type="glycosylation site" description="N-linked (GlcNAc...) asparagine" evidence="3">
    <location>
        <position position="387"/>
    </location>
</feature>
<protein>
    <recommendedName>
        <fullName>UDP-GlcNAc:betaGal beta-1,3-N-acetylglucosaminyltransferase 7</fullName>
        <shortName>BGnT-7</shortName>
        <shortName>Beta-1,3-Gn-T7</shortName>
        <shortName>Beta-1,3-N-acetylglucosaminyltransferase 7</shortName>
        <shortName>Beta3Gn-T7</shortName>
        <ecNumber evidence="2">2.4.1.-</ecNumber>
    </recommendedName>
</protein>
<proteinExistence type="evidence at transcript level"/>
<evidence type="ECO:0000250" key="1">
    <source>
        <dbReference type="UniProtKB" id="Q8K0J2"/>
    </source>
</evidence>
<evidence type="ECO:0000250" key="2">
    <source>
        <dbReference type="UniProtKB" id="Q8NFL0"/>
    </source>
</evidence>
<evidence type="ECO:0000255" key="3"/>
<evidence type="ECO:0000305" key="4"/>
<dbReference type="EC" id="2.4.1.-" evidence="2"/>
<dbReference type="EMBL" id="BC081994">
    <property type="protein sequence ID" value="AAH81994.1"/>
    <property type="molecule type" value="mRNA"/>
</dbReference>
<dbReference type="RefSeq" id="NP_001012134.1">
    <property type="nucleotide sequence ID" value="NM_001012134.1"/>
</dbReference>
<dbReference type="SMR" id="Q66H69"/>
<dbReference type="FunCoup" id="Q66H69">
    <property type="interactions" value="96"/>
</dbReference>
<dbReference type="STRING" id="10116.ENSRNOP00000024578"/>
<dbReference type="CAZy" id="GT31">
    <property type="family name" value="Glycosyltransferase Family 31"/>
</dbReference>
<dbReference type="GlyCosmos" id="Q66H69">
    <property type="glycosylation" value="4 sites, No reported glycans"/>
</dbReference>
<dbReference type="GlyGen" id="Q66H69">
    <property type="glycosylation" value="7 sites"/>
</dbReference>
<dbReference type="PhosphoSitePlus" id="Q66H69"/>
<dbReference type="PaxDb" id="10116-ENSRNOP00000024578"/>
<dbReference type="Ensembl" id="ENSRNOT00000024578.6">
    <property type="protein sequence ID" value="ENSRNOP00000024578.4"/>
    <property type="gene ID" value="ENSRNOG00000018267.6"/>
</dbReference>
<dbReference type="GeneID" id="316583"/>
<dbReference type="KEGG" id="rno:316583"/>
<dbReference type="UCSC" id="RGD:1310580">
    <property type="organism name" value="rat"/>
</dbReference>
<dbReference type="AGR" id="RGD:1310580"/>
<dbReference type="CTD" id="93010"/>
<dbReference type="RGD" id="1310580">
    <property type="gene designation" value="B3gnt7"/>
</dbReference>
<dbReference type="eggNOG" id="KOG2287">
    <property type="taxonomic scope" value="Eukaryota"/>
</dbReference>
<dbReference type="GeneTree" id="ENSGT00940000157606"/>
<dbReference type="HOGENOM" id="CLU_036849_5_1_1"/>
<dbReference type="InParanoid" id="Q66H69"/>
<dbReference type="OMA" id="MFQWKKT"/>
<dbReference type="OrthoDB" id="2139606at2759"/>
<dbReference type="PhylomeDB" id="Q66H69"/>
<dbReference type="TreeFam" id="TF318639"/>
<dbReference type="Reactome" id="R-RNO-2022854">
    <property type="pathway name" value="Keratan sulfate biosynthesis"/>
</dbReference>
<dbReference type="Reactome" id="R-RNO-913709">
    <property type="pathway name" value="O-linked glycosylation of mucins"/>
</dbReference>
<dbReference type="UniPathway" id="UPA00378"/>
<dbReference type="PRO" id="PR:Q66H69"/>
<dbReference type="Proteomes" id="UP000002494">
    <property type="component" value="Chromosome 9"/>
</dbReference>
<dbReference type="Bgee" id="ENSRNOG00000018267">
    <property type="expression patterns" value="Expressed in stomach and 19 other cell types or tissues"/>
</dbReference>
<dbReference type="GO" id="GO:0000139">
    <property type="term" value="C:Golgi membrane"/>
    <property type="evidence" value="ECO:0000318"/>
    <property type="project" value="GO_Central"/>
</dbReference>
<dbReference type="GO" id="GO:0008375">
    <property type="term" value="F:acetylglucosaminyltransferase activity"/>
    <property type="evidence" value="ECO:0000250"/>
    <property type="project" value="UniProtKB"/>
</dbReference>
<dbReference type="GO" id="GO:0008194">
    <property type="term" value="F:UDP-glycosyltransferase activity"/>
    <property type="evidence" value="ECO:0000318"/>
    <property type="project" value="GO_Central"/>
</dbReference>
<dbReference type="GO" id="GO:0018146">
    <property type="term" value="P:keratan sulfate proteoglycan biosynthetic process"/>
    <property type="evidence" value="ECO:0000250"/>
    <property type="project" value="UniProtKB"/>
</dbReference>
<dbReference type="GO" id="GO:0030311">
    <property type="term" value="P:poly-N-acetyllactosamine biosynthetic process"/>
    <property type="evidence" value="ECO:0000318"/>
    <property type="project" value="GO_Central"/>
</dbReference>
<dbReference type="GO" id="GO:0006493">
    <property type="term" value="P:protein O-linked glycosylation"/>
    <property type="evidence" value="ECO:0000318"/>
    <property type="project" value="GO_Central"/>
</dbReference>
<dbReference type="FunFam" id="3.90.550.50:FF:000014">
    <property type="entry name" value="Hexosyltransferase"/>
    <property type="match status" value="1"/>
</dbReference>
<dbReference type="Gene3D" id="3.90.550.50">
    <property type="match status" value="1"/>
</dbReference>
<dbReference type="InterPro" id="IPR002659">
    <property type="entry name" value="Glyco_trans_31"/>
</dbReference>
<dbReference type="PANTHER" id="PTHR11214">
    <property type="entry name" value="BETA-1,3-N-ACETYLGLUCOSAMINYLTRANSFERASE"/>
    <property type="match status" value="1"/>
</dbReference>
<dbReference type="PANTHER" id="PTHR11214:SF93">
    <property type="entry name" value="UDP-GLCNAC:BETAGAL BETA-1,3-N-ACETYLGLUCOSAMINYLTRANSFERASE 7"/>
    <property type="match status" value="1"/>
</dbReference>
<dbReference type="Pfam" id="PF01762">
    <property type="entry name" value="Galactosyl_T"/>
    <property type="match status" value="1"/>
</dbReference>